<accession>Q9C9U3</accession>
<accession>F4HRY9</accession>
<proteinExistence type="evidence at transcript level"/>
<protein>
    <recommendedName>
        <fullName>Alpha-dioxygenase 2</fullName>
        <shortName>Alpha DOX2</shortName>
        <ecNumber>1.14.99.-</ecNumber>
    </recommendedName>
    <alternativeName>
        <fullName>Fatty acid dioxygenase AlphaDOX2</fullName>
    </alternativeName>
</protein>
<evidence type="ECO:0000255" key="1"/>
<evidence type="ECO:0000255" key="2">
    <source>
        <dbReference type="PROSITE-ProRule" id="PRU00298"/>
    </source>
</evidence>
<evidence type="ECO:0000269" key="3">
    <source>
    </source>
</evidence>
<evidence type="ECO:0000269" key="4">
    <source>
    </source>
</evidence>
<evidence type="ECO:0000305" key="5"/>
<evidence type="ECO:0000305" key="6">
    <source>
    </source>
</evidence>
<gene>
    <name type="primary">DOX2</name>
    <name type="synonym">DIOX2</name>
    <name type="ordered locus">At1g73680</name>
    <name type="ORF">F25P22.10</name>
</gene>
<feature type="signal peptide" evidence="1">
    <location>
        <begin position="1"/>
        <end position="20"/>
    </location>
</feature>
<feature type="chain" id="PRO_0000420285" description="Alpha-dioxygenase 2">
    <location>
        <begin position="21"/>
        <end position="631"/>
    </location>
</feature>
<feature type="active site" description="Proton acceptor" evidence="6">
    <location>
        <position position="378"/>
    </location>
</feature>
<feature type="binding site" description="axial binding residue" evidence="6">
    <location>
        <position position="157"/>
    </location>
    <ligand>
        <name>heme b</name>
        <dbReference type="ChEBI" id="CHEBI:60344"/>
    </ligand>
    <ligandPart>
        <name>Fe</name>
        <dbReference type="ChEBI" id="CHEBI:18248"/>
    </ligandPart>
</feature>
<feature type="binding site" description="axial binding residue" evidence="6">
    <location>
        <position position="381"/>
    </location>
    <ligand>
        <name>heme b</name>
        <dbReference type="ChEBI" id="CHEBI:60344"/>
    </ligand>
    <ligandPart>
        <name>Fe</name>
        <dbReference type="ChEBI" id="CHEBI:18248"/>
    </ligandPart>
</feature>
<feature type="site" description="Transition state stabilizer" evidence="2">
    <location>
        <position position="258"/>
    </location>
</feature>
<feature type="glycosylation site" description="N-linked (GlcNAc...) asparagine" evidence="1">
    <location>
        <position position="583"/>
    </location>
</feature>
<feature type="splice variant" id="VSP_044438" description="In isoform 2." evidence="5">
    <original>ILDPHPS</original>
    <variation>FFCQYFFFPENLEKKI</variation>
    <location>
        <begin position="119"/>
        <end position="125"/>
    </location>
</feature>
<comment type="function">
    <text evidence="4">Alpha-dioxygenase that catalyzes the primary oxygenation of fatty acids into oxylipins. May be involved in the senescence process.</text>
</comment>
<comment type="cofactor">
    <cofactor evidence="6">
        <name>heme b</name>
        <dbReference type="ChEBI" id="CHEBI:60344"/>
    </cofactor>
</comment>
<comment type="alternative products">
    <event type="alternative splicing"/>
    <isoform>
        <id>Q9C9U3-1</id>
        <name>1</name>
        <sequence type="displayed"/>
    </isoform>
    <isoform>
        <id>Q9C9U3-2</id>
        <name>2</name>
        <sequence type="described" ref="VSP_044438"/>
    </isoform>
</comment>
<comment type="tissue specificity">
    <text evidence="3 4">Expressed in seedlings (cotyledons, young leaves, and hypocotyls), flowers, siliques and old leaves.</text>
</comment>
<comment type="developmental stage">
    <text evidence="4">Accumulates progressively during senescence induced by detachment of leaves. In flowers, expressed in anthers and ovules prior to fertilization, and in siliques, present in developing seeds.</text>
</comment>
<comment type="similarity">
    <text evidence="2">Belongs to the peroxidase family.</text>
</comment>
<dbReference type="EC" id="1.14.99.-"/>
<dbReference type="EMBL" id="AC012679">
    <property type="protein sequence ID" value="AAG52078.1"/>
    <property type="molecule type" value="Genomic_DNA"/>
</dbReference>
<dbReference type="EMBL" id="CP002684">
    <property type="protein sequence ID" value="AEE35496.1"/>
    <property type="molecule type" value="Genomic_DNA"/>
</dbReference>
<dbReference type="EMBL" id="CP002684">
    <property type="protein sequence ID" value="AEE35497.1"/>
    <property type="molecule type" value="Genomic_DNA"/>
</dbReference>
<dbReference type="EMBL" id="AY081283">
    <property type="protein sequence ID" value="AAL91172.1"/>
    <property type="molecule type" value="mRNA"/>
</dbReference>
<dbReference type="EMBL" id="AY128743">
    <property type="protein sequence ID" value="AAM91143.1"/>
    <property type="molecule type" value="mRNA"/>
</dbReference>
<dbReference type="PIR" id="H96763">
    <property type="entry name" value="H96763"/>
</dbReference>
<dbReference type="RefSeq" id="NP_001185393.1">
    <molecule id="Q9C9U3-2"/>
    <property type="nucleotide sequence ID" value="NM_001198464.1"/>
</dbReference>
<dbReference type="RefSeq" id="NP_177509.1">
    <molecule id="Q9C9U3-1"/>
    <property type="nucleotide sequence ID" value="NM_106027.3"/>
</dbReference>
<dbReference type="SMR" id="Q9C9U3"/>
<dbReference type="FunCoup" id="Q9C9U3">
    <property type="interactions" value="105"/>
</dbReference>
<dbReference type="STRING" id="3702.Q9C9U3"/>
<dbReference type="PeroxiBase" id="3378">
    <property type="entry name" value="AtDiOx02"/>
</dbReference>
<dbReference type="GlyCosmos" id="Q9C9U3">
    <property type="glycosylation" value="1 site, No reported glycans"/>
</dbReference>
<dbReference type="GlyGen" id="Q9C9U3">
    <property type="glycosylation" value="1 site"/>
</dbReference>
<dbReference type="PaxDb" id="3702-AT1G73680.2"/>
<dbReference type="ProteomicsDB" id="222141">
    <molecule id="Q9C9U3-1"/>
</dbReference>
<dbReference type="EnsemblPlants" id="AT1G73680.1">
    <molecule id="Q9C9U3-1"/>
    <property type="protein sequence ID" value="AT1G73680.1"/>
    <property type="gene ID" value="AT1G73680"/>
</dbReference>
<dbReference type="EnsemblPlants" id="AT1G73680.2">
    <molecule id="Q9C9U3-2"/>
    <property type="protein sequence ID" value="AT1G73680.2"/>
    <property type="gene ID" value="AT1G73680"/>
</dbReference>
<dbReference type="GeneID" id="843703"/>
<dbReference type="Gramene" id="AT1G73680.1">
    <molecule id="Q9C9U3-1"/>
    <property type="protein sequence ID" value="AT1G73680.1"/>
    <property type="gene ID" value="AT1G73680"/>
</dbReference>
<dbReference type="Gramene" id="AT1G73680.2">
    <molecule id="Q9C9U3-2"/>
    <property type="protein sequence ID" value="AT1G73680.2"/>
    <property type="gene ID" value="AT1G73680"/>
</dbReference>
<dbReference type="KEGG" id="ath:AT1G73680"/>
<dbReference type="Araport" id="AT1G73680"/>
<dbReference type="TAIR" id="AT1G73680">
    <property type="gene designation" value="ALPHA DOX2"/>
</dbReference>
<dbReference type="eggNOG" id="KOG2408">
    <property type="taxonomic scope" value="Eukaryota"/>
</dbReference>
<dbReference type="HOGENOM" id="CLU_033051_0_0_1"/>
<dbReference type="InParanoid" id="Q9C9U3"/>
<dbReference type="OMA" id="MTAYTRI"/>
<dbReference type="PhylomeDB" id="Q9C9U3"/>
<dbReference type="PRO" id="PR:Q9C9U3"/>
<dbReference type="Proteomes" id="UP000006548">
    <property type="component" value="Chromosome 1"/>
</dbReference>
<dbReference type="ExpressionAtlas" id="Q9C9U3">
    <property type="expression patterns" value="baseline and differential"/>
</dbReference>
<dbReference type="GO" id="GO:0051213">
    <property type="term" value="F:dioxygenase activity"/>
    <property type="evidence" value="ECO:0000314"/>
    <property type="project" value="TAIR"/>
</dbReference>
<dbReference type="GO" id="GO:0020037">
    <property type="term" value="F:heme binding"/>
    <property type="evidence" value="ECO:0007669"/>
    <property type="project" value="InterPro"/>
</dbReference>
<dbReference type="GO" id="GO:0046872">
    <property type="term" value="F:metal ion binding"/>
    <property type="evidence" value="ECO:0007669"/>
    <property type="project" value="UniProtKB-KW"/>
</dbReference>
<dbReference type="GO" id="GO:0004601">
    <property type="term" value="F:peroxidase activity"/>
    <property type="evidence" value="ECO:0007669"/>
    <property type="project" value="UniProtKB-KW"/>
</dbReference>
<dbReference type="GO" id="GO:0006633">
    <property type="term" value="P:fatty acid biosynthetic process"/>
    <property type="evidence" value="ECO:0007669"/>
    <property type="project" value="UniProtKB-KW"/>
</dbReference>
<dbReference type="GO" id="GO:0006631">
    <property type="term" value="P:fatty acid metabolic process"/>
    <property type="evidence" value="ECO:0000314"/>
    <property type="project" value="TAIR"/>
</dbReference>
<dbReference type="GO" id="GO:0010150">
    <property type="term" value="P:leaf senescence"/>
    <property type="evidence" value="ECO:0000270"/>
    <property type="project" value="TAIR"/>
</dbReference>
<dbReference type="GO" id="GO:0001676">
    <property type="term" value="P:long-chain fatty acid metabolic process"/>
    <property type="evidence" value="ECO:0000314"/>
    <property type="project" value="TAIR"/>
</dbReference>
<dbReference type="GO" id="GO:0031408">
    <property type="term" value="P:oxylipin biosynthetic process"/>
    <property type="evidence" value="ECO:0007669"/>
    <property type="project" value="UniProtKB-KW"/>
</dbReference>
<dbReference type="GO" id="GO:0006979">
    <property type="term" value="P:response to oxidative stress"/>
    <property type="evidence" value="ECO:0007669"/>
    <property type="project" value="InterPro"/>
</dbReference>
<dbReference type="CDD" id="cd09818">
    <property type="entry name" value="PIOX_like"/>
    <property type="match status" value="1"/>
</dbReference>
<dbReference type="FunFam" id="1.10.640.10:FF:000011">
    <property type="entry name" value="Alpha-dioxygenase 1"/>
    <property type="match status" value="1"/>
</dbReference>
<dbReference type="Gene3D" id="1.10.640.10">
    <property type="entry name" value="Haem peroxidase domain superfamily, animal type"/>
    <property type="match status" value="1"/>
</dbReference>
<dbReference type="InterPro" id="IPR034815">
    <property type="entry name" value="A_dioxygenase"/>
</dbReference>
<dbReference type="InterPro" id="IPR019791">
    <property type="entry name" value="Haem_peroxidase_animal"/>
</dbReference>
<dbReference type="InterPro" id="IPR010255">
    <property type="entry name" value="Haem_peroxidase_sf"/>
</dbReference>
<dbReference type="InterPro" id="IPR037120">
    <property type="entry name" value="Haem_peroxidase_sf_animal"/>
</dbReference>
<dbReference type="InterPro" id="IPR050783">
    <property type="entry name" value="Oxylipin_biosynth_metab"/>
</dbReference>
<dbReference type="PANTHER" id="PTHR11903:SF25">
    <property type="entry name" value="ALPHA-DIOXYGENASE 2"/>
    <property type="match status" value="1"/>
</dbReference>
<dbReference type="PANTHER" id="PTHR11903">
    <property type="entry name" value="PROSTAGLANDIN G/H SYNTHASE"/>
    <property type="match status" value="1"/>
</dbReference>
<dbReference type="Pfam" id="PF03098">
    <property type="entry name" value="An_peroxidase"/>
    <property type="match status" value="1"/>
</dbReference>
<dbReference type="SUPFAM" id="SSF48113">
    <property type="entry name" value="Heme-dependent peroxidases"/>
    <property type="match status" value="1"/>
</dbReference>
<dbReference type="PROSITE" id="PS50292">
    <property type="entry name" value="PEROXIDASE_3"/>
    <property type="match status" value="1"/>
</dbReference>
<name>DOX2_ARATH</name>
<sequence length="631" mass="72458">MGFSPSSSWFLHPQLHHVVSKMSYFDAFLFYIVHLVDKLGLWHRFPVLLGVAYLGLRRHLHQRYNLVHVGPINGQGYDTDEFCYRTADGKCNHPSDNTIGSQGSFIGRNMPPSTSQYGILDPHPSVVATKLLARKRFIDNGDQFNVIACSWIQFMIHDWVDHLEDTHQIELEAPEEVASGCPLKSFKFLRTKKVPTDDHHKSGAVNTRTPWWDGSVIYGNDETGMRRVRVFKDGKLKISGDGLLERDERGVPISGDIRNSWSGFSLLQALFVKEHNSVCDMLKERYPDFDDEKLYRTARLVTAAVIAKVHTIDWTIELLKTDTLTAGMRINWYGFFGKKVKDMVGARFGPLFSGLVGLKKPNDHGVPYSLTEEFVSVYRMHCLLPETLILRDMNSENVDKENPAIEREIPMTELIGKKAGEKASKLGFEQLLVSMGHQSCGALTLWNYPNWMRNLVAQDIDGEDRPHLIDMAALEIYRDRERGVPRYNEFRKNLLMSPISKWEELTDDEEAIKVLREVYEDDIEKLDLNVGLHAEKKIKGFAISETAFFIFLLVASRRLEADRFFTTNFNEKTYTKEGLEWVNTTETLKDVIDRHFPRLTDQWMRCSSAFSVWGSDPNPKNWVPLYLRSAP</sequence>
<organism>
    <name type="scientific">Arabidopsis thaliana</name>
    <name type="common">Mouse-ear cress</name>
    <dbReference type="NCBI Taxonomy" id="3702"/>
    <lineage>
        <taxon>Eukaryota</taxon>
        <taxon>Viridiplantae</taxon>
        <taxon>Streptophyta</taxon>
        <taxon>Embryophyta</taxon>
        <taxon>Tracheophyta</taxon>
        <taxon>Spermatophyta</taxon>
        <taxon>Magnoliopsida</taxon>
        <taxon>eudicotyledons</taxon>
        <taxon>Gunneridae</taxon>
        <taxon>Pentapetalae</taxon>
        <taxon>rosids</taxon>
        <taxon>malvids</taxon>
        <taxon>Brassicales</taxon>
        <taxon>Brassicaceae</taxon>
        <taxon>Camelineae</taxon>
        <taxon>Arabidopsis</taxon>
    </lineage>
</organism>
<reference key="1">
    <citation type="journal article" date="2000" name="Nature">
        <title>Sequence and analysis of chromosome 1 of the plant Arabidopsis thaliana.</title>
        <authorList>
            <person name="Theologis A."/>
            <person name="Ecker J.R."/>
            <person name="Palm C.J."/>
            <person name="Federspiel N.A."/>
            <person name="Kaul S."/>
            <person name="White O."/>
            <person name="Alonso J."/>
            <person name="Altafi H."/>
            <person name="Araujo R."/>
            <person name="Bowman C.L."/>
            <person name="Brooks S.Y."/>
            <person name="Buehler E."/>
            <person name="Chan A."/>
            <person name="Chao Q."/>
            <person name="Chen H."/>
            <person name="Cheuk R.F."/>
            <person name="Chin C.W."/>
            <person name="Chung M.K."/>
            <person name="Conn L."/>
            <person name="Conway A.B."/>
            <person name="Conway A.R."/>
            <person name="Creasy T.H."/>
            <person name="Dewar K."/>
            <person name="Dunn P."/>
            <person name="Etgu P."/>
            <person name="Feldblyum T.V."/>
            <person name="Feng J.-D."/>
            <person name="Fong B."/>
            <person name="Fujii C.Y."/>
            <person name="Gill J.E."/>
            <person name="Goldsmith A.D."/>
            <person name="Haas B."/>
            <person name="Hansen N.F."/>
            <person name="Hughes B."/>
            <person name="Huizar L."/>
            <person name="Hunter J.L."/>
            <person name="Jenkins J."/>
            <person name="Johnson-Hopson C."/>
            <person name="Khan S."/>
            <person name="Khaykin E."/>
            <person name="Kim C.J."/>
            <person name="Koo H.L."/>
            <person name="Kremenetskaia I."/>
            <person name="Kurtz D.B."/>
            <person name="Kwan A."/>
            <person name="Lam B."/>
            <person name="Langin-Hooper S."/>
            <person name="Lee A."/>
            <person name="Lee J.M."/>
            <person name="Lenz C.A."/>
            <person name="Li J.H."/>
            <person name="Li Y.-P."/>
            <person name="Lin X."/>
            <person name="Liu S.X."/>
            <person name="Liu Z.A."/>
            <person name="Luros J.S."/>
            <person name="Maiti R."/>
            <person name="Marziali A."/>
            <person name="Militscher J."/>
            <person name="Miranda M."/>
            <person name="Nguyen M."/>
            <person name="Nierman W.C."/>
            <person name="Osborne B.I."/>
            <person name="Pai G."/>
            <person name="Peterson J."/>
            <person name="Pham P.K."/>
            <person name="Rizzo M."/>
            <person name="Rooney T."/>
            <person name="Rowley D."/>
            <person name="Sakano H."/>
            <person name="Salzberg S.L."/>
            <person name="Schwartz J.R."/>
            <person name="Shinn P."/>
            <person name="Southwick A.M."/>
            <person name="Sun H."/>
            <person name="Tallon L.J."/>
            <person name="Tambunga G."/>
            <person name="Toriumi M.J."/>
            <person name="Town C.D."/>
            <person name="Utterback T."/>
            <person name="Van Aken S."/>
            <person name="Vaysberg M."/>
            <person name="Vysotskaia V.S."/>
            <person name="Walker M."/>
            <person name="Wu D."/>
            <person name="Yu G."/>
            <person name="Fraser C.M."/>
            <person name="Venter J.C."/>
            <person name="Davis R.W."/>
        </authorList>
    </citation>
    <scope>NUCLEOTIDE SEQUENCE [LARGE SCALE GENOMIC DNA]</scope>
    <source>
        <strain>cv. Columbia</strain>
    </source>
</reference>
<reference key="2">
    <citation type="journal article" date="2017" name="Plant J.">
        <title>Araport11: a complete reannotation of the Arabidopsis thaliana reference genome.</title>
        <authorList>
            <person name="Cheng C.Y."/>
            <person name="Krishnakumar V."/>
            <person name="Chan A.P."/>
            <person name="Thibaud-Nissen F."/>
            <person name="Schobel S."/>
            <person name="Town C.D."/>
        </authorList>
    </citation>
    <scope>GENOME REANNOTATION</scope>
    <source>
        <strain>cv. Columbia</strain>
    </source>
</reference>
<reference key="3">
    <citation type="journal article" date="2003" name="Science">
        <title>Empirical analysis of transcriptional activity in the Arabidopsis genome.</title>
        <authorList>
            <person name="Yamada K."/>
            <person name="Lim J."/>
            <person name="Dale J.M."/>
            <person name="Chen H."/>
            <person name="Shinn P."/>
            <person name="Palm C.J."/>
            <person name="Southwick A.M."/>
            <person name="Wu H.C."/>
            <person name="Kim C.J."/>
            <person name="Nguyen M."/>
            <person name="Pham P.K."/>
            <person name="Cheuk R.F."/>
            <person name="Karlin-Newmann G."/>
            <person name="Liu S.X."/>
            <person name="Lam B."/>
            <person name="Sakano H."/>
            <person name="Wu T."/>
            <person name="Yu G."/>
            <person name="Miranda M."/>
            <person name="Quach H.L."/>
            <person name="Tripp M."/>
            <person name="Chang C.H."/>
            <person name="Lee J.M."/>
            <person name="Toriumi M.J."/>
            <person name="Chan M.M."/>
            <person name="Tang C.C."/>
            <person name="Onodera C.S."/>
            <person name="Deng J.M."/>
            <person name="Akiyama K."/>
            <person name="Ansari Y."/>
            <person name="Arakawa T."/>
            <person name="Banh J."/>
            <person name="Banno F."/>
            <person name="Bowser L."/>
            <person name="Brooks S.Y."/>
            <person name="Carninci P."/>
            <person name="Chao Q."/>
            <person name="Choy N."/>
            <person name="Enju A."/>
            <person name="Goldsmith A.D."/>
            <person name="Gurjal M."/>
            <person name="Hansen N.F."/>
            <person name="Hayashizaki Y."/>
            <person name="Johnson-Hopson C."/>
            <person name="Hsuan V.W."/>
            <person name="Iida K."/>
            <person name="Karnes M."/>
            <person name="Khan S."/>
            <person name="Koesema E."/>
            <person name="Ishida J."/>
            <person name="Jiang P.X."/>
            <person name="Jones T."/>
            <person name="Kawai J."/>
            <person name="Kamiya A."/>
            <person name="Meyers C."/>
            <person name="Nakajima M."/>
            <person name="Narusaka M."/>
            <person name="Seki M."/>
            <person name="Sakurai T."/>
            <person name="Satou M."/>
            <person name="Tamse R."/>
            <person name="Vaysberg M."/>
            <person name="Wallender E.K."/>
            <person name="Wong C."/>
            <person name="Yamamura Y."/>
            <person name="Yuan S."/>
            <person name="Shinozaki K."/>
            <person name="Davis R.W."/>
            <person name="Theologis A."/>
            <person name="Ecker J.R."/>
        </authorList>
    </citation>
    <scope>NUCLEOTIDE SEQUENCE [LARGE SCALE MRNA] (ISOFORM 1)</scope>
    <source>
        <strain>cv. Columbia</strain>
    </source>
</reference>
<reference key="4">
    <citation type="journal article" date="2007" name="Plant Cell">
        <title>Oxylipins produced by the 9-lipoxygenase pathway in Arabidopsis regulate lateral root development and defense responses through a specific signaling cascade.</title>
        <authorList>
            <person name="Vellosillo T."/>
            <person name="Martinez M."/>
            <person name="Lopez M.A."/>
            <person name="Vicente J."/>
            <person name="Cascon T."/>
            <person name="Dolan L."/>
            <person name="Hamberg M."/>
            <person name="Castresana C."/>
        </authorList>
    </citation>
    <scope>TISSUE SPECIFICITY</scope>
</reference>
<reference key="5">
    <citation type="journal article" date="2009" name="Plant Physiol.">
        <title>Functional analysis of alpha-DOX2, an active alpha-dioxygenase critical for normal development in tomato plants.</title>
        <authorList>
            <person name="Bannenberg G."/>
            <person name="Martinez M."/>
            <person name="Rodriguez M.J."/>
            <person name="Lopez M.A."/>
            <person name="Ponce de Leon I."/>
            <person name="Hamberg M."/>
            <person name="Castresana C."/>
        </authorList>
    </citation>
    <scope>FUNCTION</scope>
    <scope>TISSUE SPECIFICITY</scope>
    <scope>DEVELOPMENTAL STAGE</scope>
</reference>
<keyword id="KW-0025">Alternative splicing</keyword>
<keyword id="KW-0223">Dioxygenase</keyword>
<keyword id="KW-0275">Fatty acid biosynthesis</keyword>
<keyword id="KW-0276">Fatty acid metabolism</keyword>
<keyword id="KW-0325">Glycoprotein</keyword>
<keyword id="KW-0349">Heme</keyword>
<keyword id="KW-0408">Iron</keyword>
<keyword id="KW-0444">Lipid biosynthesis</keyword>
<keyword id="KW-0443">Lipid metabolism</keyword>
<keyword id="KW-0479">Metal-binding</keyword>
<keyword id="KW-0560">Oxidoreductase</keyword>
<keyword id="KW-0925">Oxylipin biosynthesis</keyword>
<keyword id="KW-0575">Peroxidase</keyword>
<keyword id="KW-1185">Reference proteome</keyword>
<keyword id="KW-0732">Signal</keyword>